<evidence type="ECO:0000255" key="1">
    <source>
        <dbReference type="HAMAP-Rule" id="MF_00175"/>
    </source>
</evidence>
<evidence type="ECO:0000255" key="2">
    <source>
        <dbReference type="PROSITE-ProRule" id="PRU01250"/>
    </source>
</evidence>
<evidence type="ECO:0000256" key="3">
    <source>
        <dbReference type="SAM" id="MobiDB-lite"/>
    </source>
</evidence>
<reference key="1">
    <citation type="journal article" date="2007" name="PLoS Genet.">
        <title>Patterns and implications of gene gain and loss in the evolution of Prochlorococcus.</title>
        <authorList>
            <person name="Kettler G.C."/>
            <person name="Martiny A.C."/>
            <person name="Huang K."/>
            <person name="Zucker J."/>
            <person name="Coleman M.L."/>
            <person name="Rodrigue S."/>
            <person name="Chen F."/>
            <person name="Lapidus A."/>
            <person name="Ferriera S."/>
            <person name="Johnson J."/>
            <person name="Steglich C."/>
            <person name="Church G.M."/>
            <person name="Richardson P."/>
            <person name="Chisholm S.W."/>
        </authorList>
    </citation>
    <scope>NUCLEOTIDE SEQUENCE [LARGE SCALE GENOMIC DNA]</scope>
    <source>
        <strain>MIT 9303</strain>
    </source>
</reference>
<dbReference type="EMBL" id="CP000554">
    <property type="protein sequence ID" value="ABM76825.1"/>
    <property type="molecule type" value="Genomic_DNA"/>
</dbReference>
<dbReference type="RefSeq" id="WP_011824757.1">
    <property type="nucleotide sequence ID" value="NC_008820.1"/>
</dbReference>
<dbReference type="SMR" id="A2C5R5"/>
<dbReference type="STRING" id="59922.P9303_00681"/>
<dbReference type="KEGG" id="pmf:P9303_00681"/>
<dbReference type="HOGENOM" id="CLU_014218_8_2_3"/>
<dbReference type="BioCyc" id="PMAR59922:G1G80-66-MONOMER"/>
<dbReference type="Proteomes" id="UP000002274">
    <property type="component" value="Chromosome"/>
</dbReference>
<dbReference type="GO" id="GO:0009376">
    <property type="term" value="C:HslUV protease complex"/>
    <property type="evidence" value="ECO:0007669"/>
    <property type="project" value="TreeGrafter"/>
</dbReference>
<dbReference type="GO" id="GO:0005524">
    <property type="term" value="F:ATP binding"/>
    <property type="evidence" value="ECO:0007669"/>
    <property type="project" value="UniProtKB-UniRule"/>
</dbReference>
<dbReference type="GO" id="GO:0016887">
    <property type="term" value="F:ATP hydrolysis activity"/>
    <property type="evidence" value="ECO:0007669"/>
    <property type="project" value="InterPro"/>
</dbReference>
<dbReference type="GO" id="GO:0140662">
    <property type="term" value="F:ATP-dependent protein folding chaperone"/>
    <property type="evidence" value="ECO:0007669"/>
    <property type="project" value="InterPro"/>
</dbReference>
<dbReference type="GO" id="GO:0046983">
    <property type="term" value="F:protein dimerization activity"/>
    <property type="evidence" value="ECO:0007669"/>
    <property type="project" value="InterPro"/>
</dbReference>
<dbReference type="GO" id="GO:0051082">
    <property type="term" value="F:unfolded protein binding"/>
    <property type="evidence" value="ECO:0007669"/>
    <property type="project" value="UniProtKB-UniRule"/>
</dbReference>
<dbReference type="GO" id="GO:0008270">
    <property type="term" value="F:zinc ion binding"/>
    <property type="evidence" value="ECO:0007669"/>
    <property type="project" value="InterPro"/>
</dbReference>
<dbReference type="GO" id="GO:0051301">
    <property type="term" value="P:cell division"/>
    <property type="evidence" value="ECO:0007669"/>
    <property type="project" value="TreeGrafter"/>
</dbReference>
<dbReference type="GO" id="GO:0051603">
    <property type="term" value="P:proteolysis involved in protein catabolic process"/>
    <property type="evidence" value="ECO:0007669"/>
    <property type="project" value="TreeGrafter"/>
</dbReference>
<dbReference type="CDD" id="cd19497">
    <property type="entry name" value="RecA-like_ClpX"/>
    <property type="match status" value="1"/>
</dbReference>
<dbReference type="FunFam" id="1.10.8.60:FF:000002">
    <property type="entry name" value="ATP-dependent Clp protease ATP-binding subunit ClpX"/>
    <property type="match status" value="1"/>
</dbReference>
<dbReference type="FunFam" id="3.40.50.300:FF:000005">
    <property type="entry name" value="ATP-dependent Clp protease ATP-binding subunit ClpX"/>
    <property type="match status" value="1"/>
</dbReference>
<dbReference type="Gene3D" id="1.10.8.60">
    <property type="match status" value="1"/>
</dbReference>
<dbReference type="Gene3D" id="6.20.220.10">
    <property type="entry name" value="ClpX chaperone, C4-type zinc finger domain"/>
    <property type="match status" value="1"/>
</dbReference>
<dbReference type="Gene3D" id="3.40.50.300">
    <property type="entry name" value="P-loop containing nucleotide triphosphate hydrolases"/>
    <property type="match status" value="1"/>
</dbReference>
<dbReference type="HAMAP" id="MF_00175">
    <property type="entry name" value="ClpX"/>
    <property type="match status" value="1"/>
</dbReference>
<dbReference type="InterPro" id="IPR003593">
    <property type="entry name" value="AAA+_ATPase"/>
</dbReference>
<dbReference type="InterPro" id="IPR050052">
    <property type="entry name" value="ATP-dep_Clp_protease_ClpX"/>
</dbReference>
<dbReference type="InterPro" id="IPR003959">
    <property type="entry name" value="ATPase_AAA_core"/>
</dbReference>
<dbReference type="InterPro" id="IPR019489">
    <property type="entry name" value="Clp_ATPase_C"/>
</dbReference>
<dbReference type="InterPro" id="IPR004487">
    <property type="entry name" value="Clp_protease_ATP-bd_su_ClpX"/>
</dbReference>
<dbReference type="InterPro" id="IPR046425">
    <property type="entry name" value="ClpX_bact"/>
</dbReference>
<dbReference type="InterPro" id="IPR027417">
    <property type="entry name" value="P-loop_NTPase"/>
</dbReference>
<dbReference type="InterPro" id="IPR010603">
    <property type="entry name" value="Znf_CppX_C4"/>
</dbReference>
<dbReference type="InterPro" id="IPR038366">
    <property type="entry name" value="Znf_CppX_C4_sf"/>
</dbReference>
<dbReference type="NCBIfam" id="TIGR00382">
    <property type="entry name" value="clpX"/>
    <property type="match status" value="1"/>
</dbReference>
<dbReference type="NCBIfam" id="NF003745">
    <property type="entry name" value="PRK05342.1"/>
    <property type="match status" value="1"/>
</dbReference>
<dbReference type="PANTHER" id="PTHR48102:SF7">
    <property type="entry name" value="ATP-DEPENDENT CLP PROTEASE ATP-BINDING SUBUNIT CLPX-LIKE, MITOCHONDRIAL"/>
    <property type="match status" value="1"/>
</dbReference>
<dbReference type="PANTHER" id="PTHR48102">
    <property type="entry name" value="ATP-DEPENDENT CLP PROTEASE ATP-BINDING SUBUNIT CLPX-LIKE, MITOCHONDRIAL-RELATED"/>
    <property type="match status" value="1"/>
</dbReference>
<dbReference type="Pfam" id="PF07724">
    <property type="entry name" value="AAA_2"/>
    <property type="match status" value="1"/>
</dbReference>
<dbReference type="Pfam" id="PF10431">
    <property type="entry name" value="ClpB_D2-small"/>
    <property type="match status" value="1"/>
</dbReference>
<dbReference type="Pfam" id="PF06689">
    <property type="entry name" value="zf-C4_ClpX"/>
    <property type="match status" value="1"/>
</dbReference>
<dbReference type="SMART" id="SM00382">
    <property type="entry name" value="AAA"/>
    <property type="match status" value="1"/>
</dbReference>
<dbReference type="SMART" id="SM01086">
    <property type="entry name" value="ClpB_D2-small"/>
    <property type="match status" value="1"/>
</dbReference>
<dbReference type="SMART" id="SM00994">
    <property type="entry name" value="zf-C4_ClpX"/>
    <property type="match status" value="1"/>
</dbReference>
<dbReference type="SUPFAM" id="SSF57716">
    <property type="entry name" value="Glucocorticoid receptor-like (DNA-binding domain)"/>
    <property type="match status" value="1"/>
</dbReference>
<dbReference type="SUPFAM" id="SSF52540">
    <property type="entry name" value="P-loop containing nucleoside triphosphate hydrolases"/>
    <property type="match status" value="1"/>
</dbReference>
<dbReference type="PROSITE" id="PS51902">
    <property type="entry name" value="CLPX_ZB"/>
    <property type="match status" value="1"/>
</dbReference>
<feature type="chain" id="PRO_1000024614" description="ATP-dependent Clp protease ATP-binding subunit ClpX">
    <location>
        <begin position="1"/>
        <end position="452"/>
    </location>
</feature>
<feature type="domain" description="ClpX-type ZB" evidence="2">
    <location>
        <begin position="1"/>
        <end position="51"/>
    </location>
</feature>
<feature type="region of interest" description="Disordered" evidence="3">
    <location>
        <begin position="50"/>
        <end position="79"/>
    </location>
</feature>
<feature type="binding site" evidence="2">
    <location>
        <position position="10"/>
    </location>
    <ligand>
        <name>Zn(2+)</name>
        <dbReference type="ChEBI" id="CHEBI:29105"/>
    </ligand>
</feature>
<feature type="binding site" evidence="2">
    <location>
        <position position="13"/>
    </location>
    <ligand>
        <name>Zn(2+)</name>
        <dbReference type="ChEBI" id="CHEBI:29105"/>
    </ligand>
</feature>
<feature type="binding site" evidence="2">
    <location>
        <position position="32"/>
    </location>
    <ligand>
        <name>Zn(2+)</name>
        <dbReference type="ChEBI" id="CHEBI:29105"/>
    </ligand>
</feature>
<feature type="binding site" evidence="2">
    <location>
        <position position="35"/>
    </location>
    <ligand>
        <name>Zn(2+)</name>
        <dbReference type="ChEBI" id="CHEBI:29105"/>
    </ligand>
</feature>
<feature type="binding site" evidence="1">
    <location>
        <begin position="143"/>
        <end position="150"/>
    </location>
    <ligand>
        <name>ATP</name>
        <dbReference type="ChEBI" id="CHEBI:30616"/>
    </ligand>
</feature>
<proteinExistence type="inferred from homology"/>
<accession>A2C5R5</accession>
<organism>
    <name type="scientific">Prochlorococcus marinus (strain MIT 9303)</name>
    <dbReference type="NCBI Taxonomy" id="59922"/>
    <lineage>
        <taxon>Bacteria</taxon>
        <taxon>Bacillati</taxon>
        <taxon>Cyanobacteriota</taxon>
        <taxon>Cyanophyceae</taxon>
        <taxon>Synechococcales</taxon>
        <taxon>Prochlorococcaceae</taxon>
        <taxon>Prochlorococcus</taxon>
    </lineage>
</organism>
<protein>
    <recommendedName>
        <fullName evidence="1">ATP-dependent Clp protease ATP-binding subunit ClpX</fullName>
    </recommendedName>
</protein>
<gene>
    <name evidence="1" type="primary">clpX</name>
    <name type="ordered locus">P9303_00681</name>
</gene>
<sequence>MAKFDAHLKCSFCGKSQDQVRKLIAGPGVYICDECIDLCTEILDEELVDSQGNPRHSSESNRKSATASHKSGKPAPTLATIPKPQEIKNFLDKQVVGQEAAKKVLSVAVYNHYKRLAWQGDGQGETDLSATRLHKSNILLIGPTGCGKTLLAQTLAELLDVPFAVADATTLTEAGYVGEDVENILLRLLQKADMDVEHAQRGIIYVDEIDKIARKSENPSITRDVSGEGVQQALLKMLEGTVANVPPQGGRKHPYQDCIQIDTSQILFICGGAFIGLEDVVQRRLGRNAIGFMPSDGRGRSRANRDLKASQVLHHLEADDLVRYGLIPEFIGRIPVSAVLEPLDSQALESILTEPRDALVKQFSTLLSMDNVQLEFESDAVEAIAQEAHRRKTGARALRGIIEELMLDLMYDLPSKKNVKKFTVTRTMVDEHTGGKVLPLPANDERSHKESA</sequence>
<comment type="function">
    <text evidence="1">ATP-dependent specificity component of the Clp protease. It directs the protease to specific substrates. Can perform chaperone functions in the absence of ClpP.</text>
</comment>
<comment type="subunit">
    <text evidence="1">Component of the ClpX-ClpP complex. Forms a hexameric ring that, in the presence of ATP, binds to fourteen ClpP subunits assembled into a disk-like structure with a central cavity, resembling the structure of eukaryotic proteasomes.</text>
</comment>
<comment type="similarity">
    <text evidence="1">Belongs to the ClpX chaperone family.</text>
</comment>
<name>CLPX_PROM3</name>
<keyword id="KW-0067">ATP-binding</keyword>
<keyword id="KW-0143">Chaperone</keyword>
<keyword id="KW-0479">Metal-binding</keyword>
<keyword id="KW-0547">Nucleotide-binding</keyword>
<keyword id="KW-0862">Zinc</keyword>